<dbReference type="EMBL" id="Y18558">
    <property type="protein sequence ID" value="CAC20729.1"/>
    <property type="molecule type" value="Genomic_DNA"/>
</dbReference>
<dbReference type="RefSeq" id="NP_001153228.1">
    <property type="nucleotide sequence ID" value="NM_001159756.1"/>
</dbReference>
<dbReference type="RefSeq" id="XP_012032939.1">
    <property type="nucleotide sequence ID" value="XM_012177549.4"/>
</dbReference>
<dbReference type="RefSeq" id="XP_012032941.1">
    <property type="nucleotide sequence ID" value="XM_012177551.5"/>
</dbReference>
<dbReference type="RefSeq" id="XP_012032942.1">
    <property type="nucleotide sequence ID" value="XM_012177552.2"/>
</dbReference>
<dbReference type="RefSeq" id="XP_012032943.1">
    <property type="nucleotide sequence ID" value="XM_012177553.2"/>
</dbReference>
<dbReference type="RefSeq" id="XP_012032944.1">
    <property type="nucleotide sequence ID" value="XM_012177554.1"/>
</dbReference>
<dbReference type="RefSeq" id="XP_012032945.1">
    <property type="nucleotide sequence ID" value="XM_012177555.4"/>
</dbReference>
<dbReference type="RefSeq" id="XP_012032946.1">
    <property type="nucleotide sequence ID" value="XM_012177556.2"/>
</dbReference>
<dbReference type="RefSeq" id="XP_012032948.1">
    <property type="nucleotide sequence ID" value="XM_012177558.2"/>
</dbReference>
<dbReference type="RefSeq" id="XP_012032949.1">
    <property type="nucleotide sequence ID" value="XM_012177559.2"/>
</dbReference>
<dbReference type="RefSeq" id="XP_012032950.1">
    <property type="nucleotide sequence ID" value="XM_012177560.2"/>
</dbReference>
<dbReference type="RefSeq" id="XP_014950958.1">
    <property type="nucleotide sequence ID" value="XM_015095472.1"/>
</dbReference>
<dbReference type="RefSeq" id="XP_014950959.1">
    <property type="nucleotide sequence ID" value="XM_015095473.1"/>
</dbReference>
<dbReference type="RefSeq" id="XP_042105304.1">
    <property type="nucleotide sequence ID" value="XM_042249370.2"/>
</dbReference>
<dbReference type="RefSeq" id="XP_042105305.1">
    <property type="nucleotide sequence ID" value="XM_042249371.2"/>
</dbReference>
<dbReference type="RefSeq" id="XP_042105306.1">
    <property type="nucleotide sequence ID" value="XM_042249372.2"/>
</dbReference>
<dbReference type="RefSeq" id="XP_042105307.1">
    <property type="nucleotide sequence ID" value="XM_042249373.2"/>
</dbReference>
<dbReference type="RefSeq" id="XP_042105308.1">
    <property type="nucleotide sequence ID" value="XM_042249374.2"/>
</dbReference>
<dbReference type="RefSeq" id="XP_060271289.1">
    <property type="nucleotide sequence ID" value="XM_060415306.1"/>
</dbReference>
<dbReference type="SMR" id="Q9GJY3"/>
<dbReference type="STRING" id="9940.ENSOARP00000006575"/>
<dbReference type="GlyCosmos" id="Q9GJY3">
    <property type="glycosylation" value="2 sites, No reported glycans"/>
</dbReference>
<dbReference type="PaxDb" id="9940-ENSOARP00000006575"/>
<dbReference type="Ensembl" id="ENSOART00020070385">
    <property type="protein sequence ID" value="ENSOARP00020049977"/>
    <property type="gene ID" value="ENSOARG00020029804"/>
</dbReference>
<dbReference type="Ensembl" id="ENSOART00040009100">
    <property type="protein sequence ID" value="ENSOARP00040004736"/>
    <property type="gene ID" value="ENSOARG00040005517"/>
</dbReference>
<dbReference type="Ensembl" id="ENSOART00185004986">
    <property type="protein sequence ID" value="ENSOARP00185002283"/>
    <property type="gene ID" value="ENSOARG00185003149"/>
</dbReference>
<dbReference type="Ensembl" id="ENSOART00215061364">
    <property type="protein sequence ID" value="ENSOARP00215032540"/>
    <property type="gene ID" value="ENSOARG00215036533"/>
</dbReference>
<dbReference type="Ensembl" id="ENSOART00220002361">
    <property type="protein sequence ID" value="ENSOARP00220001512"/>
    <property type="gene ID" value="ENSOARG00220001329"/>
</dbReference>
<dbReference type="Ensembl" id="ENSOART00225018626">
    <property type="protein sequence ID" value="ENSOARP00225008989"/>
    <property type="gene ID" value="ENSOARG00225011308"/>
</dbReference>
<dbReference type="GeneID" id="100294558"/>
<dbReference type="KEGG" id="oas:100294558"/>
<dbReference type="CTD" id="1836"/>
<dbReference type="eggNOG" id="KOG0236">
    <property type="taxonomic scope" value="Eukaryota"/>
</dbReference>
<dbReference type="HOGENOM" id="CLU_003182_9_4_1"/>
<dbReference type="OMA" id="PALYWIP"/>
<dbReference type="OrthoDB" id="288203at2759"/>
<dbReference type="Proteomes" id="UP000002356">
    <property type="component" value="Chromosome 5"/>
</dbReference>
<dbReference type="Bgee" id="ENSOARG00000006140">
    <property type="expression patterns" value="Expressed in adult mammalian kidney and 55 other cell types or tissues"/>
</dbReference>
<dbReference type="GO" id="GO:0016324">
    <property type="term" value="C:apical plasma membrane"/>
    <property type="evidence" value="ECO:0007669"/>
    <property type="project" value="UniProtKB-SubCell"/>
</dbReference>
<dbReference type="GO" id="GO:0005886">
    <property type="term" value="C:plasma membrane"/>
    <property type="evidence" value="ECO:0000250"/>
    <property type="project" value="UniProtKB"/>
</dbReference>
<dbReference type="GO" id="GO:0008271">
    <property type="term" value="F:secondary active sulfate transmembrane transporter activity"/>
    <property type="evidence" value="ECO:0007669"/>
    <property type="project" value="InterPro"/>
</dbReference>
<dbReference type="GO" id="GO:0005452">
    <property type="term" value="F:solute:inorganic anion antiporter activity"/>
    <property type="evidence" value="ECO:0007669"/>
    <property type="project" value="Ensembl"/>
</dbReference>
<dbReference type="GO" id="GO:0015116">
    <property type="term" value="F:sulfate transmembrane transporter activity"/>
    <property type="evidence" value="ECO:0000250"/>
    <property type="project" value="UniProtKB"/>
</dbReference>
<dbReference type="GO" id="GO:0002062">
    <property type="term" value="P:chondrocyte differentiation"/>
    <property type="evidence" value="ECO:0000250"/>
    <property type="project" value="UniProtKB"/>
</dbReference>
<dbReference type="GO" id="GO:0035988">
    <property type="term" value="P:chondrocyte proliferation"/>
    <property type="evidence" value="ECO:0000250"/>
    <property type="project" value="UniProtKB"/>
</dbReference>
<dbReference type="GO" id="GO:1902358">
    <property type="term" value="P:sulfate transmembrane transport"/>
    <property type="evidence" value="ECO:0000250"/>
    <property type="project" value="UniProtKB"/>
</dbReference>
<dbReference type="FunFam" id="3.30.750.24:FF:000015">
    <property type="entry name" value="Sulfate transporter"/>
    <property type="match status" value="1"/>
</dbReference>
<dbReference type="Gene3D" id="3.30.750.24">
    <property type="entry name" value="STAS domain"/>
    <property type="match status" value="1"/>
</dbReference>
<dbReference type="InterPro" id="IPR018045">
    <property type="entry name" value="S04_transporter_CS"/>
</dbReference>
<dbReference type="InterPro" id="IPR011547">
    <property type="entry name" value="SLC26A/SulP_dom"/>
</dbReference>
<dbReference type="InterPro" id="IPR001902">
    <property type="entry name" value="SLC26A/SulP_fam"/>
</dbReference>
<dbReference type="InterPro" id="IPR002645">
    <property type="entry name" value="STAS_dom"/>
</dbReference>
<dbReference type="InterPro" id="IPR036513">
    <property type="entry name" value="STAS_dom_sf"/>
</dbReference>
<dbReference type="NCBIfam" id="TIGR00815">
    <property type="entry name" value="sulP"/>
    <property type="match status" value="1"/>
</dbReference>
<dbReference type="PANTHER" id="PTHR11814">
    <property type="entry name" value="SULFATE TRANSPORTER"/>
    <property type="match status" value="1"/>
</dbReference>
<dbReference type="Pfam" id="PF01740">
    <property type="entry name" value="STAS"/>
    <property type="match status" value="1"/>
</dbReference>
<dbReference type="Pfam" id="PF00916">
    <property type="entry name" value="Sulfate_transp"/>
    <property type="match status" value="1"/>
</dbReference>
<dbReference type="SUPFAM" id="SSF52091">
    <property type="entry name" value="SpoIIaa-like"/>
    <property type="match status" value="1"/>
</dbReference>
<dbReference type="PROSITE" id="PS01130">
    <property type="entry name" value="SLC26A"/>
    <property type="match status" value="1"/>
</dbReference>
<dbReference type="PROSITE" id="PS50801">
    <property type="entry name" value="STAS"/>
    <property type="match status" value="1"/>
</dbReference>
<name>S26A2_SHEEP</name>
<keyword id="KW-1003">Cell membrane</keyword>
<keyword id="KW-0325">Glycoprotein</keyword>
<keyword id="KW-0472">Membrane</keyword>
<keyword id="KW-0597">Phosphoprotein</keyword>
<keyword id="KW-1185">Reference proteome</keyword>
<keyword id="KW-0812">Transmembrane</keyword>
<keyword id="KW-1133">Transmembrane helix</keyword>
<keyword id="KW-0813">Transport</keyword>
<comment type="function">
    <text evidence="3">Sulfate transporter which mediates sulfate uptake into chondrocytes in order to maintain adequate sulfation of proteoglycans which is needed for cartilage development (By similarity). Mediates electroneutral anion exchange of sulfate ions for oxalate ions, sulfate and oxalate ions for chloride and/or hydroxyl ions and chloride ions for bromide, iodide and nitrate ions (By similarity). The coupling of sulfate transport to both hydroxyl and chloride ions likely serves to ensure transport at both acidic pH when most sulfate uptake is mediated by sulfate-hydroxide exchange and alkaline pH when most sulfate uptake is mediated by sulfate-chloride exchange (By similarity). Essential for chondrocyte proliferation, differentiation and cell size expansion (By similarity).</text>
</comment>
<comment type="catalytic activity">
    <reaction evidence="3">
        <text>oxalate(in) + sulfate(out) = oxalate(out) + sulfate(in)</text>
        <dbReference type="Rhea" id="RHEA:72275"/>
        <dbReference type="ChEBI" id="CHEBI:16189"/>
        <dbReference type="ChEBI" id="CHEBI:30623"/>
    </reaction>
</comment>
<comment type="catalytic activity">
    <reaction evidence="3">
        <text>sulfate(out) + 2 chloride(in) = sulfate(in) + 2 chloride(out)</text>
        <dbReference type="Rhea" id="RHEA:75091"/>
        <dbReference type="ChEBI" id="CHEBI:16189"/>
        <dbReference type="ChEBI" id="CHEBI:17996"/>
    </reaction>
</comment>
<comment type="catalytic activity">
    <reaction evidence="3">
        <text>oxalate(out) + 2 chloride(in) = oxalate(in) + 2 chloride(out)</text>
        <dbReference type="Rhea" id="RHEA:75095"/>
        <dbReference type="ChEBI" id="CHEBI:17996"/>
        <dbReference type="ChEBI" id="CHEBI:30623"/>
    </reaction>
</comment>
<comment type="catalytic activity">
    <reaction evidence="3">
        <text>bromide(in) + chloride(out) = bromide(out) + chloride(in)</text>
        <dbReference type="Rhea" id="RHEA:75335"/>
        <dbReference type="ChEBI" id="CHEBI:15858"/>
        <dbReference type="ChEBI" id="CHEBI:17996"/>
    </reaction>
</comment>
<comment type="catalytic activity">
    <reaction evidence="3">
        <text>nitrate(in) + chloride(out) = nitrate(out) + chloride(in)</text>
        <dbReference type="Rhea" id="RHEA:75339"/>
        <dbReference type="ChEBI" id="CHEBI:17632"/>
        <dbReference type="ChEBI" id="CHEBI:17996"/>
    </reaction>
</comment>
<comment type="catalytic activity">
    <reaction evidence="3">
        <text>iodide(in) + chloride(out) = iodide(out) + chloride(in)</text>
        <dbReference type="Rhea" id="RHEA:72379"/>
        <dbReference type="ChEBI" id="CHEBI:16382"/>
        <dbReference type="ChEBI" id="CHEBI:17996"/>
    </reaction>
</comment>
<comment type="subcellular location">
    <subcellularLocation>
        <location evidence="2">Cell membrane</location>
        <topology evidence="4">Multi-pass membrane protein</topology>
    </subcellularLocation>
    <subcellularLocation>
        <location evidence="1">Apical cell membrane</location>
        <topology evidence="4">Multi-pass membrane protein</topology>
    </subcellularLocation>
</comment>
<comment type="PTM">
    <text evidence="2">N-glycosylated.</text>
</comment>
<comment type="similarity">
    <text evidence="7">Belongs to the SLC26A/SulP transporter (TC 2.A.53) family.</text>
</comment>
<organism>
    <name type="scientific">Ovis aries</name>
    <name type="common">Sheep</name>
    <dbReference type="NCBI Taxonomy" id="9940"/>
    <lineage>
        <taxon>Eukaryota</taxon>
        <taxon>Metazoa</taxon>
        <taxon>Chordata</taxon>
        <taxon>Craniata</taxon>
        <taxon>Vertebrata</taxon>
        <taxon>Euteleostomi</taxon>
        <taxon>Mammalia</taxon>
        <taxon>Eutheria</taxon>
        <taxon>Laurasiatheria</taxon>
        <taxon>Artiodactyla</taxon>
        <taxon>Ruminantia</taxon>
        <taxon>Pecora</taxon>
        <taxon>Bovidae</taxon>
        <taxon>Caprinae</taxon>
        <taxon>Ovis</taxon>
    </lineage>
</organism>
<feature type="chain" id="PRO_0000380692" description="Sulfate transporter">
    <location>
        <begin position="1"/>
        <end position="734"/>
    </location>
</feature>
<feature type="transmembrane region" description="Helical" evidence="4">
    <location>
        <begin position="113"/>
        <end position="133"/>
    </location>
</feature>
<feature type="transmembrane region" description="Helical" evidence="4">
    <location>
        <begin position="138"/>
        <end position="158"/>
    </location>
</feature>
<feature type="transmembrane region" description="Helical" evidence="4">
    <location>
        <begin position="222"/>
        <end position="242"/>
    </location>
</feature>
<feature type="transmembrane region" description="Helical" evidence="4">
    <location>
        <begin position="247"/>
        <end position="267"/>
    </location>
</feature>
<feature type="transmembrane region" description="Helical" evidence="4">
    <location>
        <begin position="269"/>
        <end position="289"/>
    </location>
</feature>
<feature type="transmembrane region" description="Helical" evidence="4">
    <location>
        <begin position="292"/>
        <end position="312"/>
    </location>
</feature>
<feature type="transmembrane region" description="Helical" evidence="4">
    <location>
        <begin position="379"/>
        <end position="399"/>
    </location>
</feature>
<feature type="transmembrane region" description="Helical" evidence="4">
    <location>
        <begin position="415"/>
        <end position="435"/>
    </location>
</feature>
<feature type="transmembrane region" description="Helical" evidence="4">
    <location>
        <begin position="453"/>
        <end position="473"/>
    </location>
</feature>
<feature type="transmembrane region" description="Helical" evidence="4">
    <location>
        <begin position="519"/>
        <end position="539"/>
    </location>
</feature>
<feature type="domain" description="STAS" evidence="5">
    <location>
        <begin position="563"/>
        <end position="714"/>
    </location>
</feature>
<feature type="region of interest" description="Disordered" evidence="6">
    <location>
        <begin position="1"/>
        <end position="38"/>
    </location>
</feature>
<feature type="compositionally biased region" description="Polar residues" evidence="6">
    <location>
        <begin position="1"/>
        <end position="11"/>
    </location>
</feature>
<feature type="modified residue" description="Phosphoserine" evidence="2">
    <location>
        <position position="12"/>
    </location>
</feature>
<feature type="modified residue" description="Phosphoserine" evidence="2">
    <location>
        <position position="16"/>
    </location>
</feature>
<feature type="glycosylation site" description="N-linked (GlcNAc...) asparagine" evidence="4">
    <location>
        <position position="194"/>
    </location>
</feature>
<feature type="glycosylation site" description="N-linked (GlcNAc...) asparagine" evidence="4">
    <location>
        <position position="204"/>
    </location>
</feature>
<proteinExistence type="inferred from homology"/>
<accession>Q9GJY3</accession>
<protein>
    <recommendedName>
        <fullName>Sulfate transporter</fullName>
    </recommendedName>
    <alternativeName>
        <fullName>Solute carrier family 26 member 2</fullName>
    </alternativeName>
</protein>
<evidence type="ECO:0000250" key="1">
    <source>
        <dbReference type="UniProtKB" id="O70531"/>
    </source>
</evidence>
<evidence type="ECO:0000250" key="2">
    <source>
        <dbReference type="UniProtKB" id="P50443"/>
    </source>
</evidence>
<evidence type="ECO:0000250" key="3">
    <source>
        <dbReference type="UniProtKB" id="Q62273"/>
    </source>
</evidence>
<evidence type="ECO:0000255" key="4"/>
<evidence type="ECO:0000255" key="5">
    <source>
        <dbReference type="PROSITE-ProRule" id="PRU00198"/>
    </source>
</evidence>
<evidence type="ECO:0000256" key="6">
    <source>
        <dbReference type="SAM" id="MobiDB-lite"/>
    </source>
</evidence>
<evidence type="ECO:0000305" key="7"/>
<sequence>MSLKNGEQNDLSPKDSVKGNDQYRSPSGIHVEHEEESRNDFWQFESSNLFRHPRIHLEPQEKSDNNLKKFVIKKLEKSCQCSSTKAKNTIFGFLPVLQWLPKYDLKKNILGDMMSGLIVGILLVPQSIAYSLLAGQEPIYGLYTSFFASLIYFILGTSRHISVGIFGILCLMIGEVVDRELYIAGYDTVHAASNESSLVNQMSNQTCDRSCYAITVGSTVTFVAGVYQVAMGFFQVGFVSVYLSDALLGGFVTGASFTILTSQVKYLLGLSLPRSGGVGSLITTWIHIFRNIHKTNICDLITSLLCLLVLLPTKELNERFKSKLKAPIPVELFVVVAATLASHFGKLSEKYGTSIAGHIPTGFMPPKAPDWNLIPRVAVDAIAIAIIGFAITVSLSEMFAKKHGYTVKANQEMYAIGFCNIIPSFFHSFTTSAALAKTLVKESTGCQTQVSGVMTALVLLLVLLVIAPLFFSLQKSVLGVITIVNLRGALCKFKDLPQMWRISRMDTVIWFVTMLSSALISTEIGLLTGVCFSMFCVILRTQKPKASLLGLVEDSEVFESMSAYKNLQAKSGIKIFRFVAPLYYVNKEYFKSVLYKKTLNPVLVKAAQRKAAKKKIKRETVTLSGIQDEVSVQLSYDPLEFHTIVIDCSAIQFLDTAGIHTLKEVRRDYEAIGIQVLLAQCNPSVRDSLARGEYCKKDEENLLFYSVYEAMTFAEDSQNQKERYVPNGPSFSSD</sequence>
<gene>
    <name type="primary">SLC26A2</name>
</gene>
<reference key="1">
    <citation type="submission" date="1998-12" db="EMBL/GenBank/DDBJ databases">
        <title>Sequence of the ovine sulfate transporter gene.</title>
        <authorList>
            <person name="Kriegesmann B."/>
            <person name="Baumgartner B.G."/>
            <person name="Deppe A."/>
            <person name="Brenig B."/>
        </authorList>
    </citation>
    <scope>NUCLEOTIDE SEQUENCE [GENOMIC DNA]</scope>
</reference>